<feature type="chain" id="PRO_0000219554" description="Chlorosome protein E">
    <location>
        <begin position="1"/>
        <end position="82"/>
    </location>
</feature>
<feature type="region of interest" description="Disordered" evidence="2">
    <location>
        <begin position="55"/>
        <end position="82"/>
    </location>
</feature>
<feature type="compositionally biased region" description="Low complexity" evidence="2">
    <location>
        <begin position="59"/>
        <end position="69"/>
    </location>
</feature>
<feature type="binding site" description="axial binding residue" evidence="1">
    <location>
        <position position="26"/>
    </location>
    <ligand>
        <name>a bacteriochlorophyll c</name>
        <dbReference type="ChEBI" id="CHEBI:60197"/>
    </ligand>
    <ligandPart>
        <name>Mg</name>
        <dbReference type="ChEBI" id="CHEBI:25107"/>
    </ligandPart>
</feature>
<reference key="1">
    <citation type="journal article" date="1996" name="Photosyn. Res.">
        <title>Characterization of the csmD and csmE genes from Chlorobium tepidum. The CsmA, CsmA, CsmD, and CsmE proteins are components of the chlorosome envelope.</title>
        <authorList>
            <person name="Chung S."/>
            <person name="Bryant D.A."/>
        </authorList>
    </citation>
    <scope>NUCLEOTIDE SEQUENCE [GENOMIC DNA]</scope>
</reference>
<reference key="2">
    <citation type="journal article" date="2002" name="Proc. Natl. Acad. Sci. U.S.A.">
        <title>The complete genome sequence of Chlorobium tepidum TLS, a photosynthetic, anaerobic, green-sulfur bacterium.</title>
        <authorList>
            <person name="Eisen J.A."/>
            <person name="Nelson K.E."/>
            <person name="Paulsen I.T."/>
            <person name="Heidelberg J.F."/>
            <person name="Wu M."/>
            <person name="Dodson R.J."/>
            <person name="DeBoy R.T."/>
            <person name="Gwinn M.L."/>
            <person name="Nelson W.C."/>
            <person name="Haft D.H."/>
            <person name="Hickey E.K."/>
            <person name="Peterson J.D."/>
            <person name="Durkin A.S."/>
            <person name="Kolonay J.F."/>
            <person name="Yang F."/>
            <person name="Holt I.E."/>
            <person name="Umayam L.A."/>
            <person name="Mason T.M."/>
            <person name="Brenner M."/>
            <person name="Shea T.P."/>
            <person name="Parksey D.S."/>
            <person name="Nierman W.C."/>
            <person name="Feldblyum T.V."/>
            <person name="Hansen C.L."/>
            <person name="Craven M.B."/>
            <person name="Radune D."/>
            <person name="Vamathevan J.J."/>
            <person name="Khouri H.M."/>
            <person name="White O."/>
            <person name="Gruber T.M."/>
            <person name="Ketchum K.A."/>
            <person name="Venter J.C."/>
            <person name="Tettelin H."/>
            <person name="Bryant D.A."/>
            <person name="Fraser C.M."/>
        </authorList>
    </citation>
    <scope>NUCLEOTIDE SEQUENCE [LARGE SCALE GENOMIC DNA]</scope>
    <source>
        <strain>ATCC 49652 / DSM 12025 / NBRC 103806 / TLS</strain>
    </source>
</reference>
<gene>
    <name type="primary">csmE</name>
    <name type="ordered locus">CT2062</name>
</gene>
<evidence type="ECO:0000255" key="1"/>
<evidence type="ECO:0000256" key="2">
    <source>
        <dbReference type="SAM" id="MobiDB-lite"/>
    </source>
</evidence>
<evidence type="ECO:0000305" key="3"/>
<sequence>MNNPRGAFVQGAEAYGRFLEVFIDGHWWVVGDALENIGKTTKRLGANAYPHLYGGSSGLKGSSPKYSGYATPSKEVKSRFEK</sequence>
<name>CSME_CHLTE</name>
<comment type="function">
    <text>Component of the photosynthetic apparatus. The light harvesting B740 complex binds bacteriochlorophyll c.</text>
</comment>
<comment type="subcellular location">
    <subcellularLocation>
        <location>Chlorosome</location>
        <location>Chlorosome envelope</location>
    </subcellularLocation>
</comment>
<comment type="similarity">
    <text evidence="3">Belongs to the BChl C/E-binding protein family.</text>
</comment>
<protein>
    <recommendedName>
        <fullName>Chlorosome protein E</fullName>
    </recommendedName>
</protein>
<keyword id="KW-0076">Bacteriochlorophyll</keyword>
<keyword id="KW-0148">Chlorophyll</keyword>
<keyword id="KW-0151">Chlorosome</keyword>
<keyword id="KW-0157">Chromophore</keyword>
<keyword id="KW-0249">Electron transport</keyword>
<keyword id="KW-0460">Magnesium</keyword>
<keyword id="KW-0479">Metal-binding</keyword>
<keyword id="KW-0602">Photosynthesis</keyword>
<keyword id="KW-1185">Reference proteome</keyword>
<keyword id="KW-0813">Transport</keyword>
<accession>Q46386</accession>
<proteinExistence type="inferred from homology"/>
<organism>
    <name type="scientific">Chlorobaculum tepidum (strain ATCC 49652 / DSM 12025 / NBRC 103806 / TLS)</name>
    <name type="common">Chlorobium tepidum</name>
    <dbReference type="NCBI Taxonomy" id="194439"/>
    <lineage>
        <taxon>Bacteria</taxon>
        <taxon>Pseudomonadati</taxon>
        <taxon>Chlorobiota</taxon>
        <taxon>Chlorobiia</taxon>
        <taxon>Chlorobiales</taxon>
        <taxon>Chlorobiaceae</taxon>
        <taxon>Chlorobaculum</taxon>
    </lineage>
</organism>
<dbReference type="EMBL" id="U58654">
    <property type="protein sequence ID" value="AAB02726.1"/>
    <property type="molecule type" value="Genomic_DNA"/>
</dbReference>
<dbReference type="EMBL" id="AE006470">
    <property type="protein sequence ID" value="AAM73279.1"/>
    <property type="molecule type" value="Genomic_DNA"/>
</dbReference>
<dbReference type="RefSeq" id="NP_662937.1">
    <property type="nucleotide sequence ID" value="NC_002932.3"/>
</dbReference>
<dbReference type="RefSeq" id="WP_010933717.1">
    <property type="nucleotide sequence ID" value="NC_002932.3"/>
</dbReference>
<dbReference type="STRING" id="194439.CT2062"/>
<dbReference type="DNASU" id="1007498"/>
<dbReference type="EnsemblBacteria" id="AAM73279">
    <property type="protein sequence ID" value="AAM73279"/>
    <property type="gene ID" value="CT2062"/>
</dbReference>
<dbReference type="KEGG" id="cte:CT2062"/>
<dbReference type="PATRIC" id="fig|194439.7.peg.1869"/>
<dbReference type="eggNOG" id="ENOG50347RR">
    <property type="taxonomic scope" value="Bacteria"/>
</dbReference>
<dbReference type="HOGENOM" id="CLU_194367_0_0_10"/>
<dbReference type="OrthoDB" id="595321at2"/>
<dbReference type="Proteomes" id="UP000001007">
    <property type="component" value="Chromosome"/>
</dbReference>
<dbReference type="GO" id="GO:0033105">
    <property type="term" value="C:chlorosome envelope"/>
    <property type="evidence" value="ECO:0007669"/>
    <property type="project" value="UniProtKB-SubCell"/>
</dbReference>
<dbReference type="GO" id="GO:0042314">
    <property type="term" value="F:bacteriochlorophyll binding"/>
    <property type="evidence" value="ECO:0007669"/>
    <property type="project" value="UniProtKB-KW"/>
</dbReference>
<dbReference type="GO" id="GO:0046872">
    <property type="term" value="F:metal ion binding"/>
    <property type="evidence" value="ECO:0007669"/>
    <property type="project" value="UniProtKB-KW"/>
</dbReference>
<dbReference type="GO" id="GO:0015979">
    <property type="term" value="P:photosynthesis"/>
    <property type="evidence" value="ECO:0007669"/>
    <property type="project" value="UniProtKB-KW"/>
</dbReference>
<dbReference type="Gene3D" id="1.20.5.950">
    <property type="entry name" value="bacteriochlorophyll c-binding protein"/>
    <property type="match status" value="1"/>
</dbReference>
<dbReference type="InterPro" id="IPR001470">
    <property type="entry name" value="Bchl_c-bd"/>
</dbReference>
<dbReference type="InterPro" id="IPR038387">
    <property type="entry name" value="Bchl_C-bd_sf"/>
</dbReference>
<dbReference type="Pfam" id="PF02043">
    <property type="entry name" value="Bac_chlorC"/>
    <property type="match status" value="1"/>
</dbReference>
<dbReference type="PIRSF" id="PIRSF002903">
    <property type="entry name" value="Bac_chlorC_bd"/>
    <property type="match status" value="1"/>
</dbReference>
<dbReference type="PRINTS" id="PR00656">
    <property type="entry name" value="BCHLROPHYLLC"/>
</dbReference>